<keyword id="KW-1185">Reference proteome</keyword>
<sequence length="181" mass="21033">MEKNCMIMAIDNSQVDDSHTTQEELYIQKAVNAMVDRVSYMRGIKDIDKLNSIILYRITNFSQDCVMVEYFCKDDENNDEKYNIIFIHAREKDGSLLQEKCIKPRPFQKIYLTGSVENKMLILCDCLDILGDINNLRLNFYNGACGYLKLNNIDSTLKRTYSFNDDKLIITNNSNGKSFNF</sequence>
<name>423L_IIV6</name>
<protein>
    <recommendedName>
        <fullName>Uncharacterized protein 423L</fullName>
    </recommendedName>
</protein>
<organismHost>
    <name type="scientific">Acheta domesticus</name>
    <name type="common">House cricket</name>
    <dbReference type="NCBI Taxonomy" id="6997"/>
</organismHost>
<organismHost>
    <name type="scientific">Chilo suppressalis</name>
    <name type="common">Asiatic rice borer moth</name>
    <dbReference type="NCBI Taxonomy" id="168631"/>
</organismHost>
<organismHost>
    <name type="scientific">Gryllus bimaculatus</name>
    <name type="common">Two-spotted cricket</name>
    <dbReference type="NCBI Taxonomy" id="6999"/>
</organismHost>
<organismHost>
    <name type="scientific">Gryllus campestris</name>
    <dbReference type="NCBI Taxonomy" id="58607"/>
</organismHost>
<organismHost>
    <name type="scientific">Spodoptera frugiperda</name>
    <name type="common">Fall armyworm</name>
    <dbReference type="NCBI Taxonomy" id="7108"/>
</organismHost>
<dbReference type="EMBL" id="AF303741">
    <property type="protein sequence ID" value="AAK82283.1"/>
    <property type="molecule type" value="Genomic_DNA"/>
</dbReference>
<dbReference type="RefSeq" id="NP_149886.1">
    <property type="nucleotide sequence ID" value="NC_003038.1"/>
</dbReference>
<dbReference type="KEGG" id="vg:1733141"/>
<dbReference type="OrthoDB" id="33940at10239"/>
<dbReference type="Proteomes" id="UP000001359">
    <property type="component" value="Genome"/>
</dbReference>
<organism>
    <name type="scientific">Invertebrate iridescent virus 6</name>
    <name type="common">IIV-6</name>
    <name type="synonym">Chilo iridescent virus</name>
    <dbReference type="NCBI Taxonomy" id="176652"/>
    <lineage>
        <taxon>Viruses</taxon>
        <taxon>Varidnaviria</taxon>
        <taxon>Bamfordvirae</taxon>
        <taxon>Nucleocytoviricota</taxon>
        <taxon>Megaviricetes</taxon>
        <taxon>Pimascovirales</taxon>
        <taxon>Iridoviridae</taxon>
        <taxon>Betairidovirinae</taxon>
        <taxon>Iridovirus</taxon>
    </lineage>
</organism>
<feature type="chain" id="PRO_0000377888" description="Uncharacterized protein 423L">
    <location>
        <begin position="1"/>
        <end position="181"/>
    </location>
</feature>
<proteinExistence type="predicted"/>
<accession>Q91FA2</accession>
<reference key="1">
    <citation type="journal article" date="2001" name="Virology">
        <title>Analysis of the first complete DNA sequence of an invertebrate iridovirus: coding strategy of the genome of Chilo iridescent virus.</title>
        <authorList>
            <person name="Jakob N.J."/>
            <person name="Mueller K."/>
            <person name="Bahr U."/>
            <person name="Darai G."/>
        </authorList>
    </citation>
    <scope>NUCLEOTIDE SEQUENCE [LARGE SCALE GENOMIC DNA]</scope>
</reference>
<reference key="2">
    <citation type="journal article" date="2007" name="Virol. J.">
        <title>Comparative genomic analysis of the family Iridoviridae: re-annotating and defining the core set of iridovirus genes.</title>
        <authorList>
            <person name="Eaton H.E."/>
            <person name="Metcalf J."/>
            <person name="Penny E."/>
            <person name="Tcherepanov V."/>
            <person name="Upton C."/>
            <person name="Brunetti C.R."/>
        </authorList>
    </citation>
    <scope>GENOME REANNOTATION</scope>
</reference>
<gene>
    <name type="ORF">IIV6-423L</name>
</gene>